<name>TNNI3_CANLF</name>
<protein>
    <recommendedName>
        <fullName>Troponin I, cardiac muscle</fullName>
    </recommendedName>
    <alternativeName>
        <fullName>Cardiac troponin I</fullName>
    </alternativeName>
</protein>
<evidence type="ECO:0000250" key="1"/>
<evidence type="ECO:0000250" key="2">
    <source>
        <dbReference type="UniProtKB" id="P02646"/>
    </source>
</evidence>
<evidence type="ECO:0000250" key="3">
    <source>
        <dbReference type="UniProtKB" id="P08057"/>
    </source>
</evidence>
<evidence type="ECO:0000250" key="4">
    <source>
        <dbReference type="UniProtKB" id="P19429"/>
    </source>
</evidence>
<evidence type="ECO:0000250" key="5">
    <source>
        <dbReference type="UniProtKB" id="P48787"/>
    </source>
</evidence>
<evidence type="ECO:0000256" key="6">
    <source>
        <dbReference type="SAM" id="MobiDB-lite"/>
    </source>
</evidence>
<evidence type="ECO:0000305" key="7"/>
<keyword id="KW-0007">Acetylation</keyword>
<keyword id="KW-0009">Actin-binding</keyword>
<keyword id="KW-0514">Muscle protein</keyword>
<keyword id="KW-0597">Phosphoprotein</keyword>
<keyword id="KW-1185">Reference proteome</keyword>
<gene>
    <name type="primary">TNNI3</name>
</gene>
<reference key="1">
    <citation type="journal article" date="2004" name="Am. J. Vet. Res.">
        <title>Cloning and sequencing of the canine and feline cardiac troponin I genes.</title>
        <authorList>
            <person name="Rishniw M."/>
            <person name="Barr S.C."/>
            <person name="Simpson K.W."/>
            <person name="Winand N.J."/>
            <person name="Wootton J.A."/>
        </authorList>
    </citation>
    <scope>NUCLEOTIDE SEQUENCE [MRNA]</scope>
    <source>
        <tissue>Heart</tissue>
    </source>
</reference>
<organism>
    <name type="scientific">Canis lupus familiaris</name>
    <name type="common">Dog</name>
    <name type="synonym">Canis familiaris</name>
    <dbReference type="NCBI Taxonomy" id="9615"/>
    <lineage>
        <taxon>Eukaryota</taxon>
        <taxon>Metazoa</taxon>
        <taxon>Chordata</taxon>
        <taxon>Craniata</taxon>
        <taxon>Vertebrata</taxon>
        <taxon>Euteleostomi</taxon>
        <taxon>Mammalia</taxon>
        <taxon>Eutheria</taxon>
        <taxon>Laurasiatheria</taxon>
        <taxon>Carnivora</taxon>
        <taxon>Caniformia</taxon>
        <taxon>Canidae</taxon>
        <taxon>Canis</taxon>
    </lineage>
</organism>
<feature type="initiator methionine" description="Removed" evidence="3">
    <location>
        <position position="1"/>
    </location>
</feature>
<feature type="chain" id="PRO_0000186150" description="Troponin I, cardiac muscle">
    <location>
        <begin position="2"/>
        <end position="211"/>
    </location>
</feature>
<feature type="region of interest" description="Disordered" evidence="6">
    <location>
        <begin position="1"/>
        <end position="23"/>
    </location>
</feature>
<feature type="region of interest" description="Involved in binding TNC">
    <location>
        <begin position="33"/>
        <end position="80"/>
    </location>
</feature>
<feature type="region of interest" description="Involved in binding TNC and actin">
    <location>
        <begin position="130"/>
        <end position="150"/>
    </location>
</feature>
<feature type="site" description="Involved in TNI-TNT interactions" evidence="1">
    <location>
        <position position="81"/>
    </location>
</feature>
<feature type="site" description="Involved in TNI-TNT interactions" evidence="1">
    <location>
        <position position="98"/>
    </location>
</feature>
<feature type="modified residue" description="N-acetylalanine" evidence="3">
    <location>
        <position position="2"/>
    </location>
</feature>
<feature type="modified residue" description="Phosphoserine" evidence="4">
    <location>
        <position position="5"/>
    </location>
</feature>
<feature type="modified residue" description="Phosphoserine; by PKA and PKD/PRKD1" evidence="2">
    <location>
        <position position="23"/>
    </location>
</feature>
<feature type="modified residue" description="Phosphoserine; by PKA and PKD/PRKD1" evidence="4">
    <location>
        <position position="24"/>
    </location>
</feature>
<feature type="modified residue" description="Phosphotyrosine" evidence="4">
    <location>
        <position position="27"/>
    </location>
</feature>
<feature type="modified residue" description="Phosphothreonine; by STK4/MST1" evidence="4">
    <location>
        <position position="32"/>
    </location>
</feature>
<feature type="modified residue" description="Phosphoserine; by PKC/PRKCE" evidence="5">
    <location>
        <position position="43"/>
    </location>
</feature>
<feature type="modified residue" description="Phosphoserine; by PKC/PRKCE" evidence="5">
    <location>
        <position position="45"/>
    </location>
</feature>
<feature type="modified residue" description="Phosphothreonine; by STK4/MST1" evidence="4">
    <location>
        <position position="52"/>
    </location>
</feature>
<feature type="modified residue" description="Phosphoserine" evidence="4">
    <location>
        <position position="78"/>
    </location>
</feature>
<feature type="modified residue" description="Phosphothreonine" evidence="4">
    <location>
        <position position="79"/>
    </location>
</feature>
<feature type="modified residue" description="Phosphothreonine; by STK4/MST1" evidence="4">
    <location>
        <position position="130"/>
    </location>
</feature>
<feature type="modified residue" description="Phosphothreonine; by STK4/MST1" evidence="4">
    <location>
        <position position="144"/>
    </location>
</feature>
<feature type="modified residue" description="Phosphoserine; by PAK3" evidence="4">
    <location>
        <position position="151"/>
    </location>
</feature>
<feature type="modified residue" description="Phosphoserine" evidence="4">
    <location>
        <position position="167"/>
    </location>
</feature>
<feature type="modified residue" description="Phosphothreonine" evidence="4">
    <location>
        <position position="182"/>
    </location>
</feature>
<feature type="modified residue" description="Phosphoserine" evidence="4">
    <location>
        <position position="200"/>
    </location>
</feature>
<accession>Q8MKD5</accession>
<proteinExistence type="evidence at transcript level"/>
<dbReference type="EMBL" id="AF506750">
    <property type="protein sequence ID" value="AAM33343.1"/>
    <property type="molecule type" value="mRNA"/>
</dbReference>
<dbReference type="RefSeq" id="NP_001003041.1">
    <property type="nucleotide sequence ID" value="NM_001003041.1"/>
</dbReference>
<dbReference type="SMR" id="Q8MKD5"/>
<dbReference type="FunCoup" id="Q8MKD5">
    <property type="interactions" value="7"/>
</dbReference>
<dbReference type="STRING" id="9615.ENSCAFP00000003805"/>
<dbReference type="iPTMnet" id="Q8MKD5"/>
<dbReference type="PaxDb" id="9612-ENSCAFP00000003805"/>
<dbReference type="Ensembl" id="ENSCAFT00030000840.1">
    <property type="protein sequence ID" value="ENSCAFP00030000723.1"/>
    <property type="gene ID" value="ENSCAFG00030000501.1"/>
</dbReference>
<dbReference type="Ensembl" id="ENSCAFT00040014508.1">
    <property type="protein sequence ID" value="ENSCAFP00040012545.1"/>
    <property type="gene ID" value="ENSCAFG00040007766.1"/>
</dbReference>
<dbReference type="GeneID" id="403566"/>
<dbReference type="KEGG" id="cfa:403566"/>
<dbReference type="CTD" id="7137"/>
<dbReference type="eggNOG" id="KOG3977">
    <property type="taxonomic scope" value="Eukaryota"/>
</dbReference>
<dbReference type="HOGENOM" id="CLU_098686_1_0_1"/>
<dbReference type="InParanoid" id="Q8MKD5"/>
<dbReference type="OMA" id="MLQVAKH"/>
<dbReference type="OrthoDB" id="27552at33554"/>
<dbReference type="TreeFam" id="TF313374"/>
<dbReference type="Reactome" id="R-CFA-390522">
    <property type="pathway name" value="Striated Muscle Contraction"/>
</dbReference>
<dbReference type="Reactome" id="R-CFA-5578775">
    <property type="pathway name" value="Ion homeostasis"/>
</dbReference>
<dbReference type="Proteomes" id="UP000002254">
    <property type="component" value="Unplaced"/>
</dbReference>
<dbReference type="Proteomes" id="UP000694429">
    <property type="component" value="Chromosome 1"/>
</dbReference>
<dbReference type="Proteomes" id="UP000694542">
    <property type="component" value="Chromosome 1"/>
</dbReference>
<dbReference type="Proteomes" id="UP000805418">
    <property type="component" value="Unplaced"/>
</dbReference>
<dbReference type="Bgee" id="ENSCAFG00000002618">
    <property type="expression patterns" value="Expressed in mitral valve and 50 other cell types or tissues"/>
</dbReference>
<dbReference type="GO" id="GO:0005861">
    <property type="term" value="C:troponin complex"/>
    <property type="evidence" value="ECO:0000318"/>
    <property type="project" value="GO_Central"/>
</dbReference>
<dbReference type="GO" id="GO:0003779">
    <property type="term" value="F:actin binding"/>
    <property type="evidence" value="ECO:0007669"/>
    <property type="project" value="UniProtKB-KW"/>
</dbReference>
<dbReference type="GO" id="GO:0060048">
    <property type="term" value="P:cardiac muscle contraction"/>
    <property type="evidence" value="ECO:0000318"/>
    <property type="project" value="GO_Central"/>
</dbReference>
<dbReference type="GO" id="GO:0003009">
    <property type="term" value="P:skeletal muscle contraction"/>
    <property type="evidence" value="ECO:0000318"/>
    <property type="project" value="GO_Central"/>
</dbReference>
<dbReference type="FunFam" id="1.20.5.350:FF:000002">
    <property type="entry name" value="troponin I, fast skeletal muscle"/>
    <property type="match status" value="1"/>
</dbReference>
<dbReference type="Gene3D" id="1.20.5.350">
    <property type="match status" value="1"/>
</dbReference>
<dbReference type="Gene3D" id="6.10.250.180">
    <property type="match status" value="1"/>
</dbReference>
<dbReference type="InterPro" id="IPR001978">
    <property type="entry name" value="Troponin"/>
</dbReference>
<dbReference type="InterPro" id="IPR021666">
    <property type="entry name" value="Troponin-I_N"/>
</dbReference>
<dbReference type="InterPro" id="IPR050875">
    <property type="entry name" value="Troponin_I"/>
</dbReference>
<dbReference type="InterPro" id="IPR038077">
    <property type="entry name" value="Troponin_sf"/>
</dbReference>
<dbReference type="PANTHER" id="PTHR13738">
    <property type="entry name" value="TROPONIN I"/>
    <property type="match status" value="1"/>
</dbReference>
<dbReference type="PANTHER" id="PTHR13738:SF2">
    <property type="entry name" value="TROPONIN I, CARDIAC MUSCLE"/>
    <property type="match status" value="1"/>
</dbReference>
<dbReference type="Pfam" id="PF00992">
    <property type="entry name" value="Troponin"/>
    <property type="match status" value="1"/>
</dbReference>
<dbReference type="Pfam" id="PF11636">
    <property type="entry name" value="Troponin-I_N"/>
    <property type="match status" value="1"/>
</dbReference>
<dbReference type="SUPFAM" id="SSF90250">
    <property type="entry name" value="Troponin coil-coiled subunits"/>
    <property type="match status" value="1"/>
</dbReference>
<sequence>MADESGDAAGCPPPAPAPIRRQSSANYRAYATEPHAKKKSKISASRKLQLKTLMLQIAKQELEREAEERRGEKGRALSTRCQPLELAGLGFAELQDLCRQLHARVDKVDEERYDVEAKVTKNITEIADLTQKIFDLRGKFKRPTLRRVRISADAMMQALLGTRAKESLDLRAHLKQVKKEDTEKENREVGDWRKNIDALSGMEGRKKKFEG</sequence>
<comment type="function">
    <text evidence="1">Troponin I is the inhibitory subunit of troponin, the thin filament regulatory complex which confers calcium-sensitivity to striated muscle actomyosin ATPase activity.</text>
</comment>
<comment type="subunit">
    <text evidence="1">Binds to actin and tropomyosin. Interacts with TRIM63. Interacts with STK4/MST1 (By similarity).</text>
</comment>
<comment type="PTM">
    <text evidence="1">Phosphorylated at Ser-23 and Ser-24 by PRKD1; phosphorylation reduces myofilament calcium sensitivity. Phosphorylated preferentially at Thr-32. Phosphorylation by STK4/MST1 alters its binding affinity to TNNC1 (cardiac Tn-C) and TNNT2 (cardiac Tn-T). Phosphorylated at Ser-43 and Ser-45 by PRKCE; phosphorylation increases myocardium contractile dysfunction (By similarity).</text>
</comment>
<comment type="similarity">
    <text evidence="7">Belongs to the troponin I family.</text>
</comment>